<dbReference type="EC" id="5.4.2.12" evidence="1"/>
<dbReference type="EMBL" id="CP000116">
    <property type="protein sequence ID" value="AAZ98347.1"/>
    <property type="molecule type" value="Genomic_DNA"/>
</dbReference>
<dbReference type="RefSeq" id="WP_011312906.1">
    <property type="nucleotide sequence ID" value="NC_007404.1"/>
</dbReference>
<dbReference type="SMR" id="Q3SGA3"/>
<dbReference type="STRING" id="292415.Tbd_2394"/>
<dbReference type="KEGG" id="tbd:Tbd_2394"/>
<dbReference type="eggNOG" id="COG0696">
    <property type="taxonomic scope" value="Bacteria"/>
</dbReference>
<dbReference type="HOGENOM" id="CLU_026099_2_0_4"/>
<dbReference type="OrthoDB" id="9800863at2"/>
<dbReference type="UniPathway" id="UPA00109">
    <property type="reaction ID" value="UER00186"/>
</dbReference>
<dbReference type="Proteomes" id="UP000008291">
    <property type="component" value="Chromosome"/>
</dbReference>
<dbReference type="GO" id="GO:0005829">
    <property type="term" value="C:cytosol"/>
    <property type="evidence" value="ECO:0007669"/>
    <property type="project" value="TreeGrafter"/>
</dbReference>
<dbReference type="GO" id="GO:0030145">
    <property type="term" value="F:manganese ion binding"/>
    <property type="evidence" value="ECO:0007669"/>
    <property type="project" value="UniProtKB-UniRule"/>
</dbReference>
<dbReference type="GO" id="GO:0004619">
    <property type="term" value="F:phosphoglycerate mutase activity"/>
    <property type="evidence" value="ECO:0007669"/>
    <property type="project" value="UniProtKB-EC"/>
</dbReference>
<dbReference type="GO" id="GO:0006007">
    <property type="term" value="P:glucose catabolic process"/>
    <property type="evidence" value="ECO:0007669"/>
    <property type="project" value="InterPro"/>
</dbReference>
<dbReference type="GO" id="GO:0006096">
    <property type="term" value="P:glycolytic process"/>
    <property type="evidence" value="ECO:0007669"/>
    <property type="project" value="UniProtKB-UniRule"/>
</dbReference>
<dbReference type="CDD" id="cd16010">
    <property type="entry name" value="iPGM"/>
    <property type="match status" value="1"/>
</dbReference>
<dbReference type="FunFam" id="3.40.1450.10:FF:000001">
    <property type="entry name" value="2,3-bisphosphoglycerate-independent phosphoglycerate mutase"/>
    <property type="match status" value="1"/>
</dbReference>
<dbReference type="Gene3D" id="3.40.720.10">
    <property type="entry name" value="Alkaline Phosphatase, subunit A"/>
    <property type="match status" value="1"/>
</dbReference>
<dbReference type="Gene3D" id="3.40.1450.10">
    <property type="entry name" value="BPG-independent phosphoglycerate mutase, domain B"/>
    <property type="match status" value="1"/>
</dbReference>
<dbReference type="HAMAP" id="MF_01038">
    <property type="entry name" value="GpmI"/>
    <property type="match status" value="1"/>
</dbReference>
<dbReference type="InterPro" id="IPR017850">
    <property type="entry name" value="Alkaline_phosphatase_core_sf"/>
</dbReference>
<dbReference type="InterPro" id="IPR011258">
    <property type="entry name" value="BPG-indep_PGM_N"/>
</dbReference>
<dbReference type="InterPro" id="IPR006124">
    <property type="entry name" value="Metalloenzyme"/>
</dbReference>
<dbReference type="InterPro" id="IPR036646">
    <property type="entry name" value="PGAM_B_sf"/>
</dbReference>
<dbReference type="InterPro" id="IPR005995">
    <property type="entry name" value="Pgm_bpd_ind"/>
</dbReference>
<dbReference type="NCBIfam" id="TIGR01307">
    <property type="entry name" value="pgm_bpd_ind"/>
    <property type="match status" value="1"/>
</dbReference>
<dbReference type="PANTHER" id="PTHR31637">
    <property type="entry name" value="2,3-BISPHOSPHOGLYCERATE-INDEPENDENT PHOSPHOGLYCERATE MUTASE"/>
    <property type="match status" value="1"/>
</dbReference>
<dbReference type="PANTHER" id="PTHR31637:SF0">
    <property type="entry name" value="2,3-BISPHOSPHOGLYCERATE-INDEPENDENT PHOSPHOGLYCERATE MUTASE"/>
    <property type="match status" value="1"/>
</dbReference>
<dbReference type="Pfam" id="PF06415">
    <property type="entry name" value="iPGM_N"/>
    <property type="match status" value="1"/>
</dbReference>
<dbReference type="Pfam" id="PF01676">
    <property type="entry name" value="Metalloenzyme"/>
    <property type="match status" value="1"/>
</dbReference>
<dbReference type="PIRSF" id="PIRSF001492">
    <property type="entry name" value="IPGAM"/>
    <property type="match status" value="1"/>
</dbReference>
<dbReference type="SUPFAM" id="SSF64158">
    <property type="entry name" value="2,3-Bisphosphoglycerate-independent phosphoglycerate mutase, substrate-binding domain"/>
    <property type="match status" value="1"/>
</dbReference>
<dbReference type="SUPFAM" id="SSF53649">
    <property type="entry name" value="Alkaline phosphatase-like"/>
    <property type="match status" value="1"/>
</dbReference>
<proteinExistence type="inferred from homology"/>
<name>GPMI_THIDA</name>
<organism>
    <name type="scientific">Thiobacillus denitrificans (strain ATCC 25259 / T1)</name>
    <dbReference type="NCBI Taxonomy" id="292415"/>
    <lineage>
        <taxon>Bacteria</taxon>
        <taxon>Pseudomonadati</taxon>
        <taxon>Pseudomonadota</taxon>
        <taxon>Betaproteobacteria</taxon>
        <taxon>Nitrosomonadales</taxon>
        <taxon>Thiobacillaceae</taxon>
        <taxon>Thiobacillus</taxon>
    </lineage>
</organism>
<protein>
    <recommendedName>
        <fullName evidence="1">2,3-bisphosphoglycerate-independent phosphoglycerate mutase</fullName>
        <shortName evidence="1">BPG-independent PGAM</shortName>
        <shortName evidence="1">Phosphoglyceromutase</shortName>
        <shortName evidence="1">iPGM</shortName>
        <ecNumber evidence="1">5.4.2.12</ecNumber>
    </recommendedName>
</protein>
<accession>Q3SGA3</accession>
<feature type="chain" id="PRO_0000212223" description="2,3-bisphosphoglycerate-independent phosphoglycerate mutase">
    <location>
        <begin position="1"/>
        <end position="513"/>
    </location>
</feature>
<feature type="active site" description="Phosphoserine intermediate" evidence="1">
    <location>
        <position position="62"/>
    </location>
</feature>
<feature type="binding site" evidence="1">
    <location>
        <position position="12"/>
    </location>
    <ligand>
        <name>Mn(2+)</name>
        <dbReference type="ChEBI" id="CHEBI:29035"/>
        <label>2</label>
    </ligand>
</feature>
<feature type="binding site" evidence="1">
    <location>
        <position position="62"/>
    </location>
    <ligand>
        <name>Mn(2+)</name>
        <dbReference type="ChEBI" id="CHEBI:29035"/>
        <label>2</label>
    </ligand>
</feature>
<feature type="binding site" evidence="1">
    <location>
        <position position="123"/>
    </location>
    <ligand>
        <name>substrate</name>
    </ligand>
</feature>
<feature type="binding site" evidence="1">
    <location>
        <begin position="153"/>
        <end position="154"/>
    </location>
    <ligand>
        <name>substrate</name>
    </ligand>
</feature>
<feature type="binding site" evidence="1">
    <location>
        <position position="185"/>
    </location>
    <ligand>
        <name>substrate</name>
    </ligand>
</feature>
<feature type="binding site" evidence="1">
    <location>
        <position position="191"/>
    </location>
    <ligand>
        <name>substrate</name>
    </ligand>
</feature>
<feature type="binding site" evidence="1">
    <location>
        <begin position="261"/>
        <end position="264"/>
    </location>
    <ligand>
        <name>substrate</name>
    </ligand>
</feature>
<feature type="binding site" evidence="1">
    <location>
        <position position="335"/>
    </location>
    <ligand>
        <name>substrate</name>
    </ligand>
</feature>
<feature type="binding site" evidence="1">
    <location>
        <position position="402"/>
    </location>
    <ligand>
        <name>Mn(2+)</name>
        <dbReference type="ChEBI" id="CHEBI:29035"/>
        <label>1</label>
    </ligand>
</feature>
<feature type="binding site" evidence="1">
    <location>
        <position position="406"/>
    </location>
    <ligand>
        <name>Mn(2+)</name>
        <dbReference type="ChEBI" id="CHEBI:29035"/>
        <label>1</label>
    </ligand>
</feature>
<feature type="binding site" evidence="1">
    <location>
        <position position="443"/>
    </location>
    <ligand>
        <name>Mn(2+)</name>
        <dbReference type="ChEBI" id="CHEBI:29035"/>
        <label>2</label>
    </ligand>
</feature>
<feature type="binding site" evidence="1">
    <location>
        <position position="444"/>
    </location>
    <ligand>
        <name>Mn(2+)</name>
        <dbReference type="ChEBI" id="CHEBI:29035"/>
        <label>2</label>
    </ligand>
</feature>
<feature type="binding site" evidence="1">
    <location>
        <position position="462"/>
    </location>
    <ligand>
        <name>Mn(2+)</name>
        <dbReference type="ChEBI" id="CHEBI:29035"/>
        <label>1</label>
    </ligand>
</feature>
<keyword id="KW-0324">Glycolysis</keyword>
<keyword id="KW-0413">Isomerase</keyword>
<keyword id="KW-0464">Manganese</keyword>
<keyword id="KW-0479">Metal-binding</keyword>
<keyword id="KW-1185">Reference proteome</keyword>
<reference key="1">
    <citation type="journal article" date="2006" name="J. Bacteriol.">
        <title>The genome sequence of the obligately chemolithoautotrophic, facultatively anaerobic bacterium Thiobacillus denitrificans.</title>
        <authorList>
            <person name="Beller H.R."/>
            <person name="Chain P.S."/>
            <person name="Letain T.E."/>
            <person name="Chakicherla A."/>
            <person name="Larimer F.W."/>
            <person name="Richardson P.M."/>
            <person name="Coleman M.A."/>
            <person name="Wood A.P."/>
            <person name="Kelly D.P."/>
        </authorList>
    </citation>
    <scope>NUCLEOTIDE SEQUENCE [LARGE SCALE GENOMIC DNA]</scope>
    <source>
        <strain>ATCC 25259 / T1</strain>
    </source>
</reference>
<evidence type="ECO:0000255" key="1">
    <source>
        <dbReference type="HAMAP-Rule" id="MF_01038"/>
    </source>
</evidence>
<gene>
    <name evidence="1" type="primary">gpmI</name>
    <name type="ordered locus">Tbd_2394</name>
</gene>
<comment type="function">
    <text evidence="1">Catalyzes the interconversion of 2-phosphoglycerate and 3-phosphoglycerate.</text>
</comment>
<comment type="catalytic activity">
    <reaction evidence="1">
        <text>(2R)-2-phosphoglycerate = (2R)-3-phosphoglycerate</text>
        <dbReference type="Rhea" id="RHEA:15901"/>
        <dbReference type="ChEBI" id="CHEBI:58272"/>
        <dbReference type="ChEBI" id="CHEBI:58289"/>
        <dbReference type="EC" id="5.4.2.12"/>
    </reaction>
</comment>
<comment type="cofactor">
    <cofactor evidence="1">
        <name>Mn(2+)</name>
        <dbReference type="ChEBI" id="CHEBI:29035"/>
    </cofactor>
    <text evidence="1">Binds 2 manganese ions per subunit.</text>
</comment>
<comment type="pathway">
    <text evidence="1">Carbohydrate degradation; glycolysis; pyruvate from D-glyceraldehyde 3-phosphate: step 3/5.</text>
</comment>
<comment type="subunit">
    <text evidence="1">Monomer.</text>
</comment>
<comment type="similarity">
    <text evidence="1">Belongs to the BPG-independent phosphoglycerate mutase family.</text>
</comment>
<sequence>MKALPVLLIILDGFGCRDERANNAIAQANKPNWDRLWKHHPHTLIHASESEVGLPKGQMGNSEVGHLNIGAGRVVYQEFTRIDRAIESGYFYTNPALLNAVHLARDNGKTLHVLGLLSDGGVHSHELHFHALLDLAAREGLSKVCLHVFLDGRDTPPKSAELYLRRLTDKIAQAGVGHVASMIGRYFAMDRDRRWQRVKSAYDLLTQGAAEFSAGSAQAGLEAAYARGETDEFVKATAIVPADGRPVTMEDGDSVIFLNFRSDRARQLSRPFIEPDFSEFERERTPRLATYCTLTGYSDDFDVSVAFPPERIKNGLGEYVANLGLRQLRIAETEKYPHVTFFFNGGEEVSFPGEDRILVSSPDVATYDLKPEMSAFEVTEKLLAAIGSKQYDLIVCNYANPDMVGHTGNLEAAIKAIETVDTCLGRVVEAQLARGGEVLITADHGNAELMLDAETGQAHTAHTMNLVPVIFVGRRHASLAETGALEDVSPTLLRMMGLPQPPEMSGESLLAFE</sequence>